<reference key="1">
    <citation type="journal article" date="2006" name="J. Bacteriol.">
        <title>Complete genome sequence of Yersinia pestis strains Antiqua and Nepal516: evidence of gene reduction in an emerging pathogen.</title>
        <authorList>
            <person name="Chain P.S.G."/>
            <person name="Hu P."/>
            <person name="Malfatti S.A."/>
            <person name="Radnedge L."/>
            <person name="Larimer F."/>
            <person name="Vergez L.M."/>
            <person name="Worsham P."/>
            <person name="Chu M.C."/>
            <person name="Andersen G.L."/>
        </authorList>
    </citation>
    <scope>NUCLEOTIDE SEQUENCE [LARGE SCALE GENOMIC DNA]</scope>
    <source>
        <strain>Nepal516</strain>
    </source>
</reference>
<reference key="2">
    <citation type="submission" date="2009-04" db="EMBL/GenBank/DDBJ databases">
        <title>Yersinia pestis Nepal516A whole genome shotgun sequencing project.</title>
        <authorList>
            <person name="Plunkett G. III"/>
            <person name="Anderson B.D."/>
            <person name="Baumler D.J."/>
            <person name="Burland V."/>
            <person name="Cabot E.L."/>
            <person name="Glasner J.D."/>
            <person name="Mau B."/>
            <person name="Neeno-Eckwall E."/>
            <person name="Perna N.T."/>
            <person name="Munk A.C."/>
            <person name="Tapia R."/>
            <person name="Green L.D."/>
            <person name="Rogers Y.C."/>
            <person name="Detter J.C."/>
            <person name="Bruce D.C."/>
            <person name="Brettin T.S."/>
        </authorList>
    </citation>
    <scope>NUCLEOTIDE SEQUENCE [LARGE SCALE GENOMIC DNA]</scope>
    <source>
        <strain>Nepal516</strain>
    </source>
</reference>
<organism>
    <name type="scientific">Yersinia pestis bv. Antiqua (strain Nepal516)</name>
    <dbReference type="NCBI Taxonomy" id="377628"/>
    <lineage>
        <taxon>Bacteria</taxon>
        <taxon>Pseudomonadati</taxon>
        <taxon>Pseudomonadota</taxon>
        <taxon>Gammaproteobacteria</taxon>
        <taxon>Enterobacterales</taxon>
        <taxon>Yersiniaceae</taxon>
        <taxon>Yersinia</taxon>
    </lineage>
</organism>
<feature type="chain" id="PRO_0000282023" description="23S rRNA (uracil(747)-C(5))-methyltransferase RlmC">
    <location>
        <begin position="1"/>
        <end position="376"/>
    </location>
</feature>
<feature type="active site" description="Nucleophile" evidence="1">
    <location>
        <position position="334"/>
    </location>
</feature>
<feature type="binding site" evidence="1">
    <location>
        <position position="3"/>
    </location>
    <ligand>
        <name>[4Fe-4S] cluster</name>
        <dbReference type="ChEBI" id="CHEBI:49883"/>
    </ligand>
</feature>
<feature type="binding site" evidence="1">
    <location>
        <position position="11"/>
    </location>
    <ligand>
        <name>[4Fe-4S] cluster</name>
        <dbReference type="ChEBI" id="CHEBI:49883"/>
    </ligand>
</feature>
<feature type="binding site" evidence="1">
    <location>
        <position position="14"/>
    </location>
    <ligand>
        <name>[4Fe-4S] cluster</name>
        <dbReference type="ChEBI" id="CHEBI:49883"/>
    </ligand>
</feature>
<feature type="binding site" evidence="1">
    <location>
        <position position="87"/>
    </location>
    <ligand>
        <name>[4Fe-4S] cluster</name>
        <dbReference type="ChEBI" id="CHEBI:49883"/>
    </ligand>
</feature>
<feature type="binding site" evidence="1">
    <location>
        <position position="212"/>
    </location>
    <ligand>
        <name>S-adenosyl-L-methionine</name>
        <dbReference type="ChEBI" id="CHEBI:59789"/>
    </ligand>
</feature>
<feature type="binding site" evidence="1">
    <location>
        <position position="241"/>
    </location>
    <ligand>
        <name>S-adenosyl-L-methionine</name>
        <dbReference type="ChEBI" id="CHEBI:59789"/>
    </ligand>
</feature>
<feature type="binding site" evidence="1">
    <location>
        <position position="262"/>
    </location>
    <ligand>
        <name>S-adenosyl-L-methionine</name>
        <dbReference type="ChEBI" id="CHEBI:59789"/>
    </ligand>
</feature>
<feature type="binding site" evidence="1">
    <location>
        <position position="307"/>
    </location>
    <ligand>
        <name>S-adenosyl-L-methionine</name>
        <dbReference type="ChEBI" id="CHEBI:59789"/>
    </ligand>
</feature>
<accession>Q1CGA8</accession>
<accession>C4GVZ7</accession>
<keyword id="KW-0004">4Fe-4S</keyword>
<keyword id="KW-0408">Iron</keyword>
<keyword id="KW-0411">Iron-sulfur</keyword>
<keyword id="KW-0479">Metal-binding</keyword>
<keyword id="KW-0489">Methyltransferase</keyword>
<keyword id="KW-0698">rRNA processing</keyword>
<keyword id="KW-0949">S-adenosyl-L-methionine</keyword>
<keyword id="KW-0808">Transferase</keyword>
<proteinExistence type="inferred from homology"/>
<evidence type="ECO:0000255" key="1">
    <source>
        <dbReference type="HAMAP-Rule" id="MF_01012"/>
    </source>
</evidence>
<protein>
    <recommendedName>
        <fullName evidence="1">23S rRNA (uracil(747)-C(5))-methyltransferase RlmC</fullName>
        <ecNumber evidence="1">2.1.1.189</ecNumber>
    </recommendedName>
    <alternativeName>
        <fullName evidence="1">23S rRNA(m5U747)-methyltransferase</fullName>
    </alternativeName>
</protein>
<comment type="function">
    <text evidence="1">Catalyzes the formation of 5-methyl-uridine at position 747 (m5U747) in 23S rRNA.</text>
</comment>
<comment type="catalytic activity">
    <reaction evidence="1">
        <text>uridine(747) in 23S rRNA + S-adenosyl-L-methionine = 5-methyluridine(747) in 23S rRNA + S-adenosyl-L-homocysteine + H(+)</text>
        <dbReference type="Rhea" id="RHEA:42628"/>
        <dbReference type="Rhea" id="RHEA-COMP:10154"/>
        <dbReference type="Rhea" id="RHEA-COMP:10155"/>
        <dbReference type="ChEBI" id="CHEBI:15378"/>
        <dbReference type="ChEBI" id="CHEBI:57856"/>
        <dbReference type="ChEBI" id="CHEBI:59789"/>
        <dbReference type="ChEBI" id="CHEBI:65315"/>
        <dbReference type="ChEBI" id="CHEBI:74447"/>
        <dbReference type="EC" id="2.1.1.189"/>
    </reaction>
</comment>
<comment type="similarity">
    <text evidence="1">Belongs to the class I-like SAM-binding methyltransferase superfamily. RNA M5U methyltransferase family. RlmC subfamily.</text>
</comment>
<name>RLMC_YERPN</name>
<gene>
    <name evidence="1" type="primary">rlmC</name>
    <name type="synonym">rumB</name>
    <name type="ordered locus">YPN_2644</name>
    <name type="ORF">YP516_2983</name>
</gene>
<sequence>MHCAQYTAGRCRSCQWLDKPYPQQLADKQHHLESLLAGHAVTQWLAPVFGRESAFRNKAKMVVSGSVERPLLGMLHRDGTPVDLCACPLYPPSFEPVFTVLKTFIARAGLTPYNVARKRGELKFLLLTESTYNGELMLRFVLRSETKLAQLIAALPWLQQQLPQLAVISANIQPVHMAILEGEREIPLTEQQALPERFNQVPLYIRPQSFFQTNPQVAASLYATARQWVQEHEVHSMWDLFCGVGGFGLHCAGPETQLTGIEINAEAIACARQSAEQLGLKNVSFAALDSTRFATAEAQIPELVLVNPPRRGIGRELCDYLSQMAPKFILYSSCNAETMAKDISLLAGYHIERVQLFDMFPHTSHYEVLTLLTLRR</sequence>
<dbReference type="EC" id="2.1.1.189" evidence="1"/>
<dbReference type="EMBL" id="CP000305">
    <property type="protein sequence ID" value="ABG18972.1"/>
    <property type="molecule type" value="Genomic_DNA"/>
</dbReference>
<dbReference type="EMBL" id="ACNQ01000017">
    <property type="protein sequence ID" value="EEO75097.1"/>
    <property type="molecule type" value="Genomic_DNA"/>
</dbReference>
<dbReference type="RefSeq" id="WP_002208756.1">
    <property type="nucleotide sequence ID" value="NZ_ACNQ01000017.1"/>
</dbReference>
<dbReference type="SMR" id="Q1CGA8"/>
<dbReference type="GeneID" id="57977467"/>
<dbReference type="KEGG" id="ypn:YPN_2644"/>
<dbReference type="HOGENOM" id="CLU_014689_0_0_6"/>
<dbReference type="Proteomes" id="UP000008936">
    <property type="component" value="Chromosome"/>
</dbReference>
<dbReference type="GO" id="GO:0051539">
    <property type="term" value="F:4 iron, 4 sulfur cluster binding"/>
    <property type="evidence" value="ECO:0007669"/>
    <property type="project" value="UniProtKB-KW"/>
</dbReference>
<dbReference type="GO" id="GO:0005506">
    <property type="term" value="F:iron ion binding"/>
    <property type="evidence" value="ECO:0007669"/>
    <property type="project" value="UniProtKB-UniRule"/>
</dbReference>
<dbReference type="GO" id="GO:0070041">
    <property type="term" value="F:rRNA (uridine-C5-)-methyltransferase activity"/>
    <property type="evidence" value="ECO:0007669"/>
    <property type="project" value="UniProtKB-UniRule"/>
</dbReference>
<dbReference type="GO" id="GO:0070475">
    <property type="term" value="P:rRNA base methylation"/>
    <property type="evidence" value="ECO:0007669"/>
    <property type="project" value="TreeGrafter"/>
</dbReference>
<dbReference type="CDD" id="cd02440">
    <property type="entry name" value="AdoMet_MTases"/>
    <property type="match status" value="1"/>
</dbReference>
<dbReference type="FunFam" id="2.40.50.1070:FF:000002">
    <property type="entry name" value="23S rRNA (uracil(747)-C(5))-methyltransferase RlmC"/>
    <property type="match status" value="1"/>
</dbReference>
<dbReference type="Gene3D" id="2.40.50.1070">
    <property type="match status" value="1"/>
</dbReference>
<dbReference type="Gene3D" id="3.40.50.150">
    <property type="entry name" value="Vaccinia Virus protein VP39"/>
    <property type="match status" value="1"/>
</dbReference>
<dbReference type="HAMAP" id="MF_01012">
    <property type="entry name" value="23SrRNA_methyltr_RlmC"/>
    <property type="match status" value="1"/>
</dbReference>
<dbReference type="InterPro" id="IPR011825">
    <property type="entry name" value="23SrRNA_MeTrfase_RlmC"/>
</dbReference>
<dbReference type="InterPro" id="IPR030390">
    <property type="entry name" value="MeTrfase_TrmA_AS"/>
</dbReference>
<dbReference type="InterPro" id="IPR030391">
    <property type="entry name" value="MeTrfase_TrmA_CS"/>
</dbReference>
<dbReference type="InterPro" id="IPR029063">
    <property type="entry name" value="SAM-dependent_MTases_sf"/>
</dbReference>
<dbReference type="InterPro" id="IPR010280">
    <property type="entry name" value="U5_MeTrfase_fam"/>
</dbReference>
<dbReference type="NCBIfam" id="TIGR02085">
    <property type="entry name" value="meth_trns_rumB"/>
    <property type="match status" value="1"/>
</dbReference>
<dbReference type="NCBIfam" id="TIGR00479">
    <property type="entry name" value="rumA"/>
    <property type="match status" value="1"/>
</dbReference>
<dbReference type="PANTHER" id="PTHR11061">
    <property type="entry name" value="RNA M5U METHYLTRANSFERASE"/>
    <property type="match status" value="1"/>
</dbReference>
<dbReference type="PANTHER" id="PTHR11061:SF30">
    <property type="entry name" value="TRNA (URACIL(54)-C(5))-METHYLTRANSFERASE"/>
    <property type="match status" value="1"/>
</dbReference>
<dbReference type="Pfam" id="PF05958">
    <property type="entry name" value="tRNA_U5-meth_tr"/>
    <property type="match status" value="1"/>
</dbReference>
<dbReference type="SUPFAM" id="SSF53335">
    <property type="entry name" value="S-adenosyl-L-methionine-dependent methyltransferases"/>
    <property type="match status" value="1"/>
</dbReference>
<dbReference type="PROSITE" id="PS51687">
    <property type="entry name" value="SAM_MT_RNA_M5U"/>
    <property type="match status" value="1"/>
</dbReference>
<dbReference type="PROSITE" id="PS01230">
    <property type="entry name" value="TRMA_1"/>
    <property type="match status" value="1"/>
</dbReference>
<dbReference type="PROSITE" id="PS01231">
    <property type="entry name" value="TRMA_2"/>
    <property type="match status" value="1"/>
</dbReference>